<name>YR514_MIMIV</name>
<gene>
    <name type="ordered locus">MIMI_R514</name>
</gene>
<keyword id="KW-1185">Reference proteome</keyword>
<accession>Q5UQ81</accession>
<sequence>MNKVNINFSLKSLPTDLLNHMNYYDNGSTNVKCTLQSFKNTLEHNLLLINKLIEESENITNVLCHPNNILLEFNSNNVMNKLINDGTVKIINDNYDGTDDDLIPLVDLSEEETNQDRLNRIINMTNRDNSGGLFGASDDDEEEISDDDLLLHDLLGNQNDTSSIFNKYTNLIGNVIDNSDNSSDSDDSDSLDGSDDLNDSDNVDNLFVG</sequence>
<organismHost>
    <name type="scientific">Acanthamoeba polyphaga</name>
    <name type="common">Amoeba</name>
    <dbReference type="NCBI Taxonomy" id="5757"/>
</organismHost>
<organism>
    <name type="scientific">Acanthamoeba polyphaga mimivirus</name>
    <name type="common">APMV</name>
    <dbReference type="NCBI Taxonomy" id="212035"/>
    <lineage>
        <taxon>Viruses</taxon>
        <taxon>Varidnaviria</taxon>
        <taxon>Bamfordvirae</taxon>
        <taxon>Nucleocytoviricota</taxon>
        <taxon>Megaviricetes</taxon>
        <taxon>Imitervirales</taxon>
        <taxon>Mimiviridae</taxon>
        <taxon>Megamimivirinae</taxon>
        <taxon>Mimivirus</taxon>
        <taxon>Mimivirus bradfordmassiliense</taxon>
    </lineage>
</organism>
<evidence type="ECO:0000256" key="1">
    <source>
        <dbReference type="SAM" id="MobiDB-lite"/>
    </source>
</evidence>
<reference key="1">
    <citation type="journal article" date="2004" name="Science">
        <title>The 1.2-megabase genome sequence of Mimivirus.</title>
        <authorList>
            <person name="Raoult D."/>
            <person name="Audic S."/>
            <person name="Robert C."/>
            <person name="Abergel C."/>
            <person name="Renesto P."/>
            <person name="Ogata H."/>
            <person name="La Scola B."/>
            <person name="Susan M."/>
            <person name="Claverie J.-M."/>
        </authorList>
    </citation>
    <scope>NUCLEOTIDE SEQUENCE [LARGE SCALE GENOMIC DNA]</scope>
    <source>
        <strain>Rowbotham-Bradford</strain>
    </source>
</reference>
<dbReference type="EMBL" id="AY653733">
    <property type="protein sequence ID" value="AAV50778.1"/>
    <property type="molecule type" value="Genomic_DNA"/>
</dbReference>
<dbReference type="KEGG" id="vg:9925146"/>
<dbReference type="OrthoDB" id="39352at10239"/>
<dbReference type="Proteomes" id="UP000001134">
    <property type="component" value="Genome"/>
</dbReference>
<protein>
    <recommendedName>
        <fullName>Uncharacterized protein R514</fullName>
    </recommendedName>
</protein>
<feature type="chain" id="PRO_0000250631" description="Uncharacterized protein R514">
    <location>
        <begin position="1"/>
        <end position="209"/>
    </location>
</feature>
<feature type="region of interest" description="Disordered" evidence="1">
    <location>
        <begin position="177"/>
        <end position="209"/>
    </location>
</feature>
<feature type="compositionally biased region" description="Acidic residues" evidence="1">
    <location>
        <begin position="183"/>
        <end position="202"/>
    </location>
</feature>
<proteinExistence type="predicted"/>